<name>GLMU_PSET1</name>
<comment type="function">
    <text evidence="1">Catalyzes the last two sequential reactions in the de novo biosynthetic pathway for UDP-N-acetylglucosamine (UDP-GlcNAc). The C-terminal domain catalyzes the transfer of acetyl group from acetyl coenzyme A to glucosamine-1-phosphate (GlcN-1-P) to produce N-acetylglucosamine-1-phosphate (GlcNAc-1-P), which is converted into UDP-GlcNAc by the transfer of uridine 5-monophosphate (from uridine 5-triphosphate), a reaction catalyzed by the N-terminal domain.</text>
</comment>
<comment type="catalytic activity">
    <reaction evidence="1">
        <text>alpha-D-glucosamine 1-phosphate + acetyl-CoA = N-acetyl-alpha-D-glucosamine 1-phosphate + CoA + H(+)</text>
        <dbReference type="Rhea" id="RHEA:13725"/>
        <dbReference type="ChEBI" id="CHEBI:15378"/>
        <dbReference type="ChEBI" id="CHEBI:57287"/>
        <dbReference type="ChEBI" id="CHEBI:57288"/>
        <dbReference type="ChEBI" id="CHEBI:57776"/>
        <dbReference type="ChEBI" id="CHEBI:58516"/>
        <dbReference type="EC" id="2.3.1.157"/>
    </reaction>
</comment>
<comment type="catalytic activity">
    <reaction evidence="1">
        <text>N-acetyl-alpha-D-glucosamine 1-phosphate + UTP + H(+) = UDP-N-acetyl-alpha-D-glucosamine + diphosphate</text>
        <dbReference type="Rhea" id="RHEA:13509"/>
        <dbReference type="ChEBI" id="CHEBI:15378"/>
        <dbReference type="ChEBI" id="CHEBI:33019"/>
        <dbReference type="ChEBI" id="CHEBI:46398"/>
        <dbReference type="ChEBI" id="CHEBI:57705"/>
        <dbReference type="ChEBI" id="CHEBI:57776"/>
        <dbReference type="EC" id="2.7.7.23"/>
    </reaction>
</comment>
<comment type="cofactor">
    <cofactor evidence="1">
        <name>Mg(2+)</name>
        <dbReference type="ChEBI" id="CHEBI:18420"/>
    </cofactor>
    <text evidence="1">Binds 1 Mg(2+) ion per subunit.</text>
</comment>
<comment type="pathway">
    <text evidence="1">Nucleotide-sugar biosynthesis; UDP-N-acetyl-alpha-D-glucosamine biosynthesis; N-acetyl-alpha-D-glucosamine 1-phosphate from alpha-D-glucosamine 6-phosphate (route II): step 2/2.</text>
</comment>
<comment type="pathway">
    <text evidence="1">Nucleotide-sugar biosynthesis; UDP-N-acetyl-alpha-D-glucosamine biosynthesis; UDP-N-acetyl-alpha-D-glucosamine from N-acetyl-alpha-D-glucosamine 1-phosphate: step 1/1.</text>
</comment>
<comment type="pathway">
    <text evidence="1">Bacterial outer membrane biogenesis; LPS lipid A biosynthesis.</text>
</comment>
<comment type="subunit">
    <text evidence="1">Homotrimer.</text>
</comment>
<comment type="subcellular location">
    <subcellularLocation>
        <location evidence="1">Cytoplasm</location>
    </subcellularLocation>
</comment>
<comment type="similarity">
    <text evidence="1">In the N-terminal section; belongs to the N-acetylglucosamine-1-phosphate uridyltransferase family.</text>
</comment>
<comment type="similarity">
    <text evidence="1">In the C-terminal section; belongs to the transferase hexapeptide repeat family.</text>
</comment>
<evidence type="ECO:0000255" key="1">
    <source>
        <dbReference type="HAMAP-Rule" id="MF_01631"/>
    </source>
</evidence>
<dbReference type="EC" id="2.7.7.23" evidence="1"/>
<dbReference type="EC" id="2.3.1.157" evidence="1"/>
<dbReference type="EMBL" id="CR954246">
    <property type="protein sequence ID" value="CAI88035.1"/>
    <property type="molecule type" value="Genomic_DNA"/>
</dbReference>
<dbReference type="SMR" id="Q3IK30"/>
<dbReference type="STRING" id="326442.PSHAa3006"/>
<dbReference type="KEGG" id="pha:PSHAa3006"/>
<dbReference type="PATRIC" id="fig|326442.8.peg.2896"/>
<dbReference type="eggNOG" id="COG1207">
    <property type="taxonomic scope" value="Bacteria"/>
</dbReference>
<dbReference type="HOGENOM" id="CLU_029499_15_2_6"/>
<dbReference type="BioCyc" id="PHAL326442:PSHA_RS14750-MONOMER"/>
<dbReference type="UniPathway" id="UPA00113">
    <property type="reaction ID" value="UER00532"/>
</dbReference>
<dbReference type="UniPathway" id="UPA00113">
    <property type="reaction ID" value="UER00533"/>
</dbReference>
<dbReference type="UniPathway" id="UPA00973"/>
<dbReference type="Proteomes" id="UP000006843">
    <property type="component" value="Chromosome I"/>
</dbReference>
<dbReference type="GO" id="GO:0005737">
    <property type="term" value="C:cytoplasm"/>
    <property type="evidence" value="ECO:0007669"/>
    <property type="project" value="UniProtKB-SubCell"/>
</dbReference>
<dbReference type="GO" id="GO:0016020">
    <property type="term" value="C:membrane"/>
    <property type="evidence" value="ECO:0007669"/>
    <property type="project" value="GOC"/>
</dbReference>
<dbReference type="GO" id="GO:0019134">
    <property type="term" value="F:glucosamine-1-phosphate N-acetyltransferase activity"/>
    <property type="evidence" value="ECO:0007669"/>
    <property type="project" value="UniProtKB-UniRule"/>
</dbReference>
<dbReference type="GO" id="GO:0000287">
    <property type="term" value="F:magnesium ion binding"/>
    <property type="evidence" value="ECO:0007669"/>
    <property type="project" value="UniProtKB-UniRule"/>
</dbReference>
<dbReference type="GO" id="GO:0003977">
    <property type="term" value="F:UDP-N-acetylglucosamine diphosphorylase activity"/>
    <property type="evidence" value="ECO:0007669"/>
    <property type="project" value="UniProtKB-UniRule"/>
</dbReference>
<dbReference type="GO" id="GO:0000902">
    <property type="term" value="P:cell morphogenesis"/>
    <property type="evidence" value="ECO:0007669"/>
    <property type="project" value="UniProtKB-UniRule"/>
</dbReference>
<dbReference type="GO" id="GO:0071555">
    <property type="term" value="P:cell wall organization"/>
    <property type="evidence" value="ECO:0007669"/>
    <property type="project" value="UniProtKB-KW"/>
</dbReference>
<dbReference type="GO" id="GO:0009245">
    <property type="term" value="P:lipid A biosynthetic process"/>
    <property type="evidence" value="ECO:0007669"/>
    <property type="project" value="UniProtKB-UniRule"/>
</dbReference>
<dbReference type="GO" id="GO:0009252">
    <property type="term" value="P:peptidoglycan biosynthetic process"/>
    <property type="evidence" value="ECO:0007669"/>
    <property type="project" value="UniProtKB-UniRule"/>
</dbReference>
<dbReference type="GO" id="GO:0008360">
    <property type="term" value="P:regulation of cell shape"/>
    <property type="evidence" value="ECO:0007669"/>
    <property type="project" value="UniProtKB-KW"/>
</dbReference>
<dbReference type="GO" id="GO:0006048">
    <property type="term" value="P:UDP-N-acetylglucosamine biosynthetic process"/>
    <property type="evidence" value="ECO:0007669"/>
    <property type="project" value="UniProtKB-UniPathway"/>
</dbReference>
<dbReference type="CDD" id="cd02540">
    <property type="entry name" value="GT2_GlmU_N_bac"/>
    <property type="match status" value="1"/>
</dbReference>
<dbReference type="CDD" id="cd03353">
    <property type="entry name" value="LbH_GlmU_C"/>
    <property type="match status" value="1"/>
</dbReference>
<dbReference type="Gene3D" id="2.160.10.10">
    <property type="entry name" value="Hexapeptide repeat proteins"/>
    <property type="match status" value="1"/>
</dbReference>
<dbReference type="Gene3D" id="3.90.550.10">
    <property type="entry name" value="Spore Coat Polysaccharide Biosynthesis Protein SpsA, Chain A"/>
    <property type="match status" value="1"/>
</dbReference>
<dbReference type="HAMAP" id="MF_01631">
    <property type="entry name" value="GlmU"/>
    <property type="match status" value="1"/>
</dbReference>
<dbReference type="InterPro" id="IPR005882">
    <property type="entry name" value="Bifunctional_GlmU"/>
</dbReference>
<dbReference type="InterPro" id="IPR050065">
    <property type="entry name" value="GlmU-like"/>
</dbReference>
<dbReference type="InterPro" id="IPR038009">
    <property type="entry name" value="GlmU_C_LbH"/>
</dbReference>
<dbReference type="InterPro" id="IPR001451">
    <property type="entry name" value="Hexapep"/>
</dbReference>
<dbReference type="InterPro" id="IPR018357">
    <property type="entry name" value="Hexapep_transf_CS"/>
</dbReference>
<dbReference type="InterPro" id="IPR025877">
    <property type="entry name" value="MobA-like_NTP_Trfase"/>
</dbReference>
<dbReference type="InterPro" id="IPR029044">
    <property type="entry name" value="Nucleotide-diphossugar_trans"/>
</dbReference>
<dbReference type="InterPro" id="IPR011004">
    <property type="entry name" value="Trimer_LpxA-like_sf"/>
</dbReference>
<dbReference type="NCBIfam" id="TIGR01173">
    <property type="entry name" value="glmU"/>
    <property type="match status" value="1"/>
</dbReference>
<dbReference type="PANTHER" id="PTHR43584:SF3">
    <property type="entry name" value="BIFUNCTIONAL PROTEIN GLMU"/>
    <property type="match status" value="1"/>
</dbReference>
<dbReference type="PANTHER" id="PTHR43584">
    <property type="entry name" value="NUCLEOTIDYL TRANSFERASE"/>
    <property type="match status" value="1"/>
</dbReference>
<dbReference type="Pfam" id="PF00132">
    <property type="entry name" value="Hexapep"/>
    <property type="match status" value="1"/>
</dbReference>
<dbReference type="Pfam" id="PF14602">
    <property type="entry name" value="Hexapep_2"/>
    <property type="match status" value="1"/>
</dbReference>
<dbReference type="Pfam" id="PF12804">
    <property type="entry name" value="NTP_transf_3"/>
    <property type="match status" value="1"/>
</dbReference>
<dbReference type="SUPFAM" id="SSF53448">
    <property type="entry name" value="Nucleotide-diphospho-sugar transferases"/>
    <property type="match status" value="1"/>
</dbReference>
<dbReference type="SUPFAM" id="SSF51161">
    <property type="entry name" value="Trimeric LpxA-like enzymes"/>
    <property type="match status" value="1"/>
</dbReference>
<dbReference type="PROSITE" id="PS00101">
    <property type="entry name" value="HEXAPEP_TRANSFERASES"/>
    <property type="match status" value="1"/>
</dbReference>
<proteinExistence type="inferred from homology"/>
<organism>
    <name type="scientific">Pseudoalteromonas translucida (strain TAC 125)</name>
    <dbReference type="NCBI Taxonomy" id="326442"/>
    <lineage>
        <taxon>Bacteria</taxon>
        <taxon>Pseudomonadati</taxon>
        <taxon>Pseudomonadota</taxon>
        <taxon>Gammaproteobacteria</taxon>
        <taxon>Alteromonadales</taxon>
        <taxon>Pseudoalteromonadaceae</taxon>
        <taxon>Pseudoalteromonas</taxon>
    </lineage>
</organism>
<accession>Q3IK30</accession>
<gene>
    <name evidence="1" type="primary">glmU</name>
    <name type="ordered locus">PSHAa3006</name>
</gene>
<protein>
    <recommendedName>
        <fullName evidence="1">Bifunctional protein GlmU</fullName>
    </recommendedName>
    <domain>
        <recommendedName>
            <fullName evidence="1">UDP-N-acetylglucosamine pyrophosphorylase</fullName>
            <ecNumber evidence="1">2.7.7.23</ecNumber>
        </recommendedName>
        <alternativeName>
            <fullName evidence="1">N-acetylglucosamine-1-phosphate uridyltransferase</fullName>
        </alternativeName>
    </domain>
    <domain>
        <recommendedName>
            <fullName evidence="1">Glucosamine-1-phosphate N-acetyltransferase</fullName>
            <ecNumber evidence="1">2.3.1.157</ecNumber>
        </recommendedName>
    </domain>
</protein>
<keyword id="KW-0012">Acyltransferase</keyword>
<keyword id="KW-0133">Cell shape</keyword>
<keyword id="KW-0961">Cell wall biogenesis/degradation</keyword>
<keyword id="KW-0963">Cytoplasm</keyword>
<keyword id="KW-0460">Magnesium</keyword>
<keyword id="KW-0479">Metal-binding</keyword>
<keyword id="KW-0511">Multifunctional enzyme</keyword>
<keyword id="KW-0548">Nucleotidyltransferase</keyword>
<keyword id="KW-0573">Peptidoglycan synthesis</keyword>
<keyword id="KW-1185">Reference proteome</keyword>
<keyword id="KW-0677">Repeat</keyword>
<keyword id="KW-0808">Transferase</keyword>
<feature type="chain" id="PRO_0000233820" description="Bifunctional protein GlmU">
    <location>
        <begin position="1"/>
        <end position="452"/>
    </location>
</feature>
<feature type="region of interest" description="Pyrophosphorylase" evidence="1">
    <location>
        <begin position="1"/>
        <end position="226"/>
    </location>
</feature>
<feature type="region of interest" description="Linker" evidence="1">
    <location>
        <begin position="227"/>
        <end position="247"/>
    </location>
</feature>
<feature type="region of interest" description="N-acetyltransferase" evidence="1">
    <location>
        <begin position="248"/>
        <end position="452"/>
    </location>
</feature>
<feature type="active site" description="Proton acceptor" evidence="1">
    <location>
        <position position="360"/>
    </location>
</feature>
<feature type="binding site" evidence="1">
    <location>
        <begin position="8"/>
        <end position="11"/>
    </location>
    <ligand>
        <name>UDP-N-acetyl-alpha-D-glucosamine</name>
        <dbReference type="ChEBI" id="CHEBI:57705"/>
    </ligand>
</feature>
<feature type="binding site" evidence="1">
    <location>
        <position position="22"/>
    </location>
    <ligand>
        <name>UDP-N-acetyl-alpha-D-glucosamine</name>
        <dbReference type="ChEBI" id="CHEBI:57705"/>
    </ligand>
</feature>
<feature type="binding site" evidence="1">
    <location>
        <position position="73"/>
    </location>
    <ligand>
        <name>UDP-N-acetyl-alpha-D-glucosamine</name>
        <dbReference type="ChEBI" id="CHEBI:57705"/>
    </ligand>
</feature>
<feature type="binding site" evidence="1">
    <location>
        <begin position="78"/>
        <end position="79"/>
    </location>
    <ligand>
        <name>UDP-N-acetyl-alpha-D-glucosamine</name>
        <dbReference type="ChEBI" id="CHEBI:57705"/>
    </ligand>
</feature>
<feature type="binding site" evidence="1">
    <location>
        <begin position="100"/>
        <end position="102"/>
    </location>
    <ligand>
        <name>UDP-N-acetyl-alpha-D-glucosamine</name>
        <dbReference type="ChEBI" id="CHEBI:57705"/>
    </ligand>
</feature>
<feature type="binding site" evidence="1">
    <location>
        <position position="102"/>
    </location>
    <ligand>
        <name>Mg(2+)</name>
        <dbReference type="ChEBI" id="CHEBI:18420"/>
    </ligand>
</feature>
<feature type="binding site" evidence="1">
    <location>
        <position position="137"/>
    </location>
    <ligand>
        <name>UDP-N-acetyl-alpha-D-glucosamine</name>
        <dbReference type="ChEBI" id="CHEBI:57705"/>
    </ligand>
</feature>
<feature type="binding site" evidence="1">
    <location>
        <position position="151"/>
    </location>
    <ligand>
        <name>UDP-N-acetyl-alpha-D-glucosamine</name>
        <dbReference type="ChEBI" id="CHEBI:57705"/>
    </ligand>
</feature>
<feature type="binding site" evidence="1">
    <location>
        <position position="166"/>
    </location>
    <ligand>
        <name>UDP-N-acetyl-alpha-D-glucosamine</name>
        <dbReference type="ChEBI" id="CHEBI:57705"/>
    </ligand>
</feature>
<feature type="binding site" evidence="1">
    <location>
        <position position="224"/>
    </location>
    <ligand>
        <name>Mg(2+)</name>
        <dbReference type="ChEBI" id="CHEBI:18420"/>
    </ligand>
</feature>
<feature type="binding site" evidence="1">
    <location>
        <position position="224"/>
    </location>
    <ligand>
        <name>UDP-N-acetyl-alpha-D-glucosamine</name>
        <dbReference type="ChEBI" id="CHEBI:57705"/>
    </ligand>
</feature>
<feature type="binding site" evidence="1">
    <location>
        <position position="330"/>
    </location>
    <ligand>
        <name>UDP-N-acetyl-alpha-D-glucosamine</name>
        <dbReference type="ChEBI" id="CHEBI:57705"/>
    </ligand>
</feature>
<feature type="binding site" evidence="1">
    <location>
        <position position="348"/>
    </location>
    <ligand>
        <name>UDP-N-acetyl-alpha-D-glucosamine</name>
        <dbReference type="ChEBI" id="CHEBI:57705"/>
    </ligand>
</feature>
<feature type="binding site" evidence="1">
    <location>
        <position position="363"/>
    </location>
    <ligand>
        <name>UDP-N-acetyl-alpha-D-glucosamine</name>
        <dbReference type="ChEBI" id="CHEBI:57705"/>
    </ligand>
</feature>
<feature type="binding site" evidence="1">
    <location>
        <position position="374"/>
    </location>
    <ligand>
        <name>UDP-N-acetyl-alpha-D-glucosamine</name>
        <dbReference type="ChEBI" id="CHEBI:57705"/>
    </ligand>
</feature>
<feature type="binding site" evidence="1">
    <location>
        <position position="377"/>
    </location>
    <ligand>
        <name>acetyl-CoA</name>
        <dbReference type="ChEBI" id="CHEBI:57288"/>
    </ligand>
</feature>
<feature type="binding site" evidence="1">
    <location>
        <begin position="383"/>
        <end position="384"/>
    </location>
    <ligand>
        <name>acetyl-CoA</name>
        <dbReference type="ChEBI" id="CHEBI:57288"/>
    </ligand>
</feature>
<feature type="binding site" evidence="1">
    <location>
        <position position="402"/>
    </location>
    <ligand>
        <name>acetyl-CoA</name>
        <dbReference type="ChEBI" id="CHEBI:57288"/>
    </ligand>
</feature>
<feature type="binding site" evidence="1">
    <location>
        <position position="420"/>
    </location>
    <ligand>
        <name>acetyl-CoA</name>
        <dbReference type="ChEBI" id="CHEBI:57288"/>
    </ligand>
</feature>
<feature type="binding site" evidence="1">
    <location>
        <position position="437"/>
    </location>
    <ligand>
        <name>acetyl-CoA</name>
        <dbReference type="ChEBI" id="CHEBI:57288"/>
    </ligand>
</feature>
<reference key="1">
    <citation type="journal article" date="2005" name="Genome Res.">
        <title>Coping with cold: the genome of the versatile marine Antarctica bacterium Pseudoalteromonas haloplanktis TAC125.</title>
        <authorList>
            <person name="Medigue C."/>
            <person name="Krin E."/>
            <person name="Pascal G."/>
            <person name="Barbe V."/>
            <person name="Bernsel A."/>
            <person name="Bertin P.N."/>
            <person name="Cheung F."/>
            <person name="Cruveiller S."/>
            <person name="D'Amico S."/>
            <person name="Duilio A."/>
            <person name="Fang G."/>
            <person name="Feller G."/>
            <person name="Ho C."/>
            <person name="Mangenot S."/>
            <person name="Marino G."/>
            <person name="Nilsson J."/>
            <person name="Parrilli E."/>
            <person name="Rocha E.P.C."/>
            <person name="Rouy Z."/>
            <person name="Sekowska A."/>
            <person name="Tutino M.L."/>
            <person name="Vallenet D."/>
            <person name="von Heijne G."/>
            <person name="Danchin A."/>
        </authorList>
    </citation>
    <scope>NUCLEOTIDE SEQUENCE [LARGE SCALE GENOMIC DNA]</scope>
    <source>
        <strain>TAC 125</strain>
    </source>
</reference>
<sequence>MSLTTVILAAGKGTRMRSALPKVLHKVAGKTMVQHVIDNAKALGATTTNLVYGHGGELLQQQLANNNVNWVLQAEQLGTGHAVAQANSHVNDDDTVLILYGDVPLTKQSTLERLLAATPKHGLAVLTVNLANPNGYGRMLRVDGKLVGIVEQKDASPEQLLISEVNTGIMAVNGRLLKSWLGNLSNNNAQGEYYLTDIVAMAHSEGVEITSAQPDHPMEVEGANNRIQLAGLERAYQAWQAQELMLNGATLADPARIDVRGTVTTGEDVLIDINVIFEGKVTIGHNVEIGPNCVLKNCSIGDNVIIKANTLIEDATVAAKCTLGPYARLRPGAIMEEDSHVGNFVEMKKTRLGKGSKANHLSYLGDAEIGEKVNIGAGTITCNYDGVNKAKTIIGNNAFIGSNSSLVAPVNIGAMATIGAGSVITNTVADEQLAIARGKQRNLDGWKRPVKK</sequence>